<organism>
    <name type="scientific">Staphylococcus aureus (strain COL)</name>
    <dbReference type="NCBI Taxonomy" id="93062"/>
    <lineage>
        <taxon>Bacteria</taxon>
        <taxon>Bacillati</taxon>
        <taxon>Bacillota</taxon>
        <taxon>Bacilli</taxon>
        <taxon>Bacillales</taxon>
        <taxon>Staphylococcaceae</taxon>
        <taxon>Staphylococcus</taxon>
    </lineage>
</organism>
<name>SDRE_STAAC</name>
<accession>Q5HIB2</accession>
<comment type="function">
    <text evidence="1">Cell surface-associated calcium-binding protein which plays an important role in adhesion and pathogenesis. Contributes to the resistance to killing by innate immune components in blood and thus attenuates bacterial clearance by interacting with host complement factor H/CFAH and modulating its activity. Also inhibits bacterial opsonization and killing by interacting with host complement regulator C4BPA and thus inhibiting classical complement pathway activation.</text>
</comment>
<comment type="subunit">
    <text evidence="1">Interacts with host complement factor H/CFAH (via C-terminus). Interacts with host complement regulator C4BPA.</text>
</comment>
<comment type="subcellular location">
    <subcellularLocation>
        <location evidence="3">Secreted</location>
        <location evidence="3">Cell wall</location>
        <topology evidence="3">Peptidoglycan-anchor</topology>
    </subcellularLocation>
    <text evidence="1">Anchored to the cell wall by sortase A (By similarity).</text>
</comment>
<comment type="similarity">
    <text evidence="5">Belongs to the serine-aspartate repeat-containing protein (SDr) family.</text>
</comment>
<gene>
    <name type="primary">sdrE</name>
    <name type="ordered locus">SACOL0610</name>
</gene>
<sequence length="1166" mass="126563">MINRDNKKAITKKGMISNRLNKFSIRKYTVGTASILVGTTLIFGLGNQEAKAAENTSTENAKQDDATTSDNKEVVSETENNSTTENNSTNPIKKETNTDSQPEAKKESTSSSTQKQQNNVTATTETKPQNIEKENVKPSTDKTATEDTSVILEEKKAPNNTNNDVTTKPSTSEPSTSEIQTKPTTPQESTNIENSQPQPTPSKVDNQVTDATNPKEPVNVSKEELKKNPEKLKELVRNDSNTDHSTKPVATAPTSVAPKRVNAKMRFAVAQPAAVASNNVNDLIKVTKQTIKVGDGKDNVAAAHDGKDIEYDTEFTIDNKVKKGDTMTINYDKNVIPSDLTDKNDPIDITDPSGEVIAKGTFDKATKQITYTFTDYVDKYEDIKSRLTLYSYIDKKTVPNETSLNLTFATAGKETSQNVTVDYQDPMVHGDSNIQSIFTKLDEDKQTIEQQIYVNPLKKSATNTKVDIAGSQVDDYGNIKLGNGSTIIDQNTEIKVYKVNSDQQLPQSNRIYDFSQYEDVTSQFDNKKSFSNNVATLDFGDINSAYIIKVVSKYTPTSDGELDIAQGTSMRTTDKYGYYNYAGYSNFIVTSNDTGGGDGTVKPEEKLYKIGDYVWEDVDKDGVQGTDSKEKPMANVLVTLTYPDGTTKSVRTDANGHYEFGGLKDGETYTVKFETPTGYLPTKVNGTTDGEKDSNGSSVTVKINGKDDMSLDTGFYKEPKYNLGDYVWEDTNKDGIQDANEPGIKDVKVTLKDSTGKVIGTTTTDASGKYKFTDLDNGNYTVEFETPAGYTPTVKNTTADDKDSNGLTTTGVIKDADNMTLDRGFYKTPKYSLGDYVWYDSNKDGKQDSTEKGIKDVTVTLQNEKGEVIGTTKTDENGKYRFDNLDSGKYKVIFEKPAGLTQTVTNTTEDDKDADGGEVDVTITDHDDFTLDNGYFEEDTSDSDSDSDSDSDSDSDSDSDSDSDSDSDSDSDSDSDSDSDSDSDSDSDSDSDSDSDSDSDSDSDSDSDSDSDSDSDSDSDSDSDSDSDSDSDSDSDSDSDSDSDSDSDSDSDSDSDSDSDSDSDSDSDSDSDSDSDSDSDSDSDSDSDSDSDSDSDSDSDSDSDSDAGKHTPVKPMSTTKDHHNKAKALPETGSENNGSNNATLFGGLFAALGSLLLFGRRKKQNK</sequence>
<protein>
    <recommendedName>
        <fullName>Serine-aspartate repeat-containing protein E</fullName>
    </recommendedName>
</protein>
<proteinExistence type="inferred from homology"/>
<reference key="1">
    <citation type="journal article" date="2005" name="J. Bacteriol.">
        <title>Insights on evolution of virulence and resistance from the complete genome analysis of an early methicillin-resistant Staphylococcus aureus strain and a biofilm-producing methicillin-resistant Staphylococcus epidermidis strain.</title>
        <authorList>
            <person name="Gill S.R."/>
            <person name="Fouts D.E."/>
            <person name="Archer G.L."/>
            <person name="Mongodin E.F."/>
            <person name="DeBoy R.T."/>
            <person name="Ravel J."/>
            <person name="Paulsen I.T."/>
            <person name="Kolonay J.F."/>
            <person name="Brinkac L.M."/>
            <person name="Beanan M.J."/>
            <person name="Dodson R.J."/>
            <person name="Daugherty S.C."/>
            <person name="Madupu R."/>
            <person name="Angiuoli S.V."/>
            <person name="Durkin A.S."/>
            <person name="Haft D.H."/>
            <person name="Vamathevan J.J."/>
            <person name="Khouri H."/>
            <person name="Utterback T.R."/>
            <person name="Lee C."/>
            <person name="Dimitrov G."/>
            <person name="Jiang L."/>
            <person name="Qin H."/>
            <person name="Weidman J."/>
            <person name="Tran K."/>
            <person name="Kang K.H."/>
            <person name="Hance I.R."/>
            <person name="Nelson K.E."/>
            <person name="Fraser C.M."/>
        </authorList>
    </citation>
    <scope>NUCLEOTIDE SEQUENCE [LARGE SCALE GENOMIC DNA]</scope>
    <source>
        <strain>COL</strain>
    </source>
</reference>
<keyword id="KW-0106">Calcium</keyword>
<keyword id="KW-0134">Cell wall</keyword>
<keyword id="KW-0572">Peptidoglycan-anchor</keyword>
<keyword id="KW-0677">Repeat</keyword>
<keyword id="KW-0964">Secreted</keyword>
<keyword id="KW-0732">Signal</keyword>
<keyword id="KW-0843">Virulence</keyword>
<dbReference type="EMBL" id="CP000046">
    <property type="protein sequence ID" value="AAW37719.1"/>
    <property type="molecule type" value="Genomic_DNA"/>
</dbReference>
<dbReference type="RefSeq" id="WP_000610303.1">
    <property type="nucleotide sequence ID" value="NC_002951.2"/>
</dbReference>
<dbReference type="SMR" id="Q5HIB2"/>
<dbReference type="KEGG" id="sac:SACOL0610"/>
<dbReference type="HOGENOM" id="CLU_004137_1_1_9"/>
<dbReference type="Proteomes" id="UP000000530">
    <property type="component" value="Chromosome"/>
</dbReference>
<dbReference type="GO" id="GO:0005576">
    <property type="term" value="C:extracellular region"/>
    <property type="evidence" value="ECO:0007669"/>
    <property type="project" value="UniProtKB-KW"/>
</dbReference>
<dbReference type="GO" id="GO:0007155">
    <property type="term" value="P:cell adhesion"/>
    <property type="evidence" value="ECO:0007669"/>
    <property type="project" value="InterPro"/>
</dbReference>
<dbReference type="Gene3D" id="2.60.40.1280">
    <property type="match status" value="1"/>
</dbReference>
<dbReference type="Gene3D" id="2.60.40.1290">
    <property type="match status" value="1"/>
</dbReference>
<dbReference type="Gene3D" id="2.60.40.10">
    <property type="entry name" value="Immunoglobulins"/>
    <property type="match status" value="3"/>
</dbReference>
<dbReference type="InterPro" id="IPR011266">
    <property type="entry name" value="Adhesin_Fg-bd_dom_2"/>
</dbReference>
<dbReference type="InterPro" id="IPR008966">
    <property type="entry name" value="Adhesion_dom_sf"/>
</dbReference>
<dbReference type="InterPro" id="IPR011252">
    <property type="entry name" value="Fibrogen-bd_dom1"/>
</dbReference>
<dbReference type="InterPro" id="IPR013783">
    <property type="entry name" value="Ig-like_fold"/>
</dbReference>
<dbReference type="InterPro" id="IPR019931">
    <property type="entry name" value="LPXTG_anchor"/>
</dbReference>
<dbReference type="InterPro" id="IPR050972">
    <property type="entry name" value="SDr-like"/>
</dbReference>
<dbReference type="InterPro" id="IPR033764">
    <property type="entry name" value="Sdr_B"/>
</dbReference>
<dbReference type="InterPro" id="IPR041171">
    <property type="entry name" value="SDR_Ig"/>
</dbReference>
<dbReference type="InterPro" id="IPR005877">
    <property type="entry name" value="YSIRK_signal_dom"/>
</dbReference>
<dbReference type="NCBIfam" id="TIGR01167">
    <property type="entry name" value="LPXTG_anchor"/>
    <property type="match status" value="1"/>
</dbReference>
<dbReference type="NCBIfam" id="TIGR01168">
    <property type="entry name" value="YSIRK_signal"/>
    <property type="match status" value="1"/>
</dbReference>
<dbReference type="PANTHER" id="PTHR34403">
    <property type="entry name" value="TOL-PAL SYSTEM PROTEIN TOLA"/>
    <property type="match status" value="1"/>
</dbReference>
<dbReference type="PANTHER" id="PTHR34403:SF8">
    <property type="entry name" value="TOL-PAL SYSTEM PROTEIN TOLA"/>
    <property type="match status" value="1"/>
</dbReference>
<dbReference type="Pfam" id="PF17961">
    <property type="entry name" value="Big_8"/>
    <property type="match status" value="1"/>
</dbReference>
<dbReference type="Pfam" id="PF00746">
    <property type="entry name" value="Gram_pos_anchor"/>
    <property type="match status" value="1"/>
</dbReference>
<dbReference type="Pfam" id="PF17210">
    <property type="entry name" value="SdrD_B"/>
    <property type="match status" value="3"/>
</dbReference>
<dbReference type="Pfam" id="PF10425">
    <property type="entry name" value="SdrG_C_C"/>
    <property type="match status" value="1"/>
</dbReference>
<dbReference type="Pfam" id="PF04650">
    <property type="entry name" value="YSIRK_signal"/>
    <property type="match status" value="1"/>
</dbReference>
<dbReference type="SUPFAM" id="SSF49401">
    <property type="entry name" value="Bacterial adhesins"/>
    <property type="match status" value="2"/>
</dbReference>
<dbReference type="SUPFAM" id="SSF117074">
    <property type="entry name" value="Hypothetical protein PA1324"/>
    <property type="match status" value="3"/>
</dbReference>
<dbReference type="PROSITE" id="PS50847">
    <property type="entry name" value="GRAM_POS_ANCHORING"/>
    <property type="match status" value="1"/>
</dbReference>
<evidence type="ECO:0000250" key="1">
    <source>
        <dbReference type="UniProtKB" id="O86489"/>
    </source>
</evidence>
<evidence type="ECO:0000255" key="2"/>
<evidence type="ECO:0000255" key="3">
    <source>
        <dbReference type="PROSITE-ProRule" id="PRU00477"/>
    </source>
</evidence>
<evidence type="ECO:0000256" key="4">
    <source>
        <dbReference type="SAM" id="MobiDB-lite"/>
    </source>
</evidence>
<evidence type="ECO:0000305" key="5"/>
<feature type="signal peptide" evidence="2">
    <location>
        <begin position="1"/>
        <end position="52"/>
    </location>
</feature>
<feature type="chain" id="PRO_0000281163" description="Serine-aspartate repeat-containing protein E">
    <location>
        <begin position="53"/>
        <end position="1132"/>
    </location>
</feature>
<feature type="propeptide" id="PRO_0000281164" description="Removed by sortase" evidence="3">
    <location>
        <begin position="1133"/>
        <end position="1166"/>
    </location>
</feature>
<feature type="domain" description="CNA-B 1">
    <location>
        <begin position="607"/>
        <end position="719"/>
    </location>
</feature>
<feature type="domain" description="CNA-B 2">
    <location>
        <begin position="720"/>
        <end position="829"/>
    </location>
</feature>
<feature type="domain" description="CNA-B 3">
    <location>
        <begin position="830"/>
        <end position="940"/>
    </location>
</feature>
<feature type="region of interest" description="Ligand binding A region">
    <location>
        <begin position="53"/>
        <end position="606"/>
    </location>
</feature>
<feature type="region of interest" description="Disordered" evidence="4">
    <location>
        <begin position="54"/>
        <end position="253"/>
    </location>
</feature>
<feature type="region of interest" description="Disordered" evidence="4">
    <location>
        <begin position="904"/>
        <end position="1141"/>
    </location>
</feature>
<feature type="short sequence motif" description="YSIRK-G/S signaling motif" evidence="1">
    <location>
        <begin position="23"/>
        <end position="34"/>
    </location>
</feature>
<feature type="short sequence motif" description="LPXTG sorting signal" evidence="3">
    <location>
        <begin position="1129"/>
        <end position="1133"/>
    </location>
</feature>
<feature type="compositionally biased region" description="Basic and acidic residues" evidence="4">
    <location>
        <begin position="61"/>
        <end position="75"/>
    </location>
</feature>
<feature type="compositionally biased region" description="Low complexity" evidence="4">
    <location>
        <begin position="77"/>
        <end position="90"/>
    </location>
</feature>
<feature type="compositionally biased region" description="Basic and acidic residues" evidence="4">
    <location>
        <begin position="92"/>
        <end position="108"/>
    </location>
</feature>
<feature type="compositionally biased region" description="Polar residues" evidence="4">
    <location>
        <begin position="118"/>
        <end position="129"/>
    </location>
</feature>
<feature type="compositionally biased region" description="Basic and acidic residues" evidence="4">
    <location>
        <begin position="130"/>
        <end position="145"/>
    </location>
</feature>
<feature type="compositionally biased region" description="Low complexity" evidence="4">
    <location>
        <begin position="166"/>
        <end position="178"/>
    </location>
</feature>
<feature type="compositionally biased region" description="Polar residues" evidence="4">
    <location>
        <begin position="179"/>
        <end position="212"/>
    </location>
</feature>
<feature type="compositionally biased region" description="Basic and acidic residues" evidence="4">
    <location>
        <begin position="221"/>
        <end position="246"/>
    </location>
</feature>
<feature type="compositionally biased region" description="Acidic residues" evidence="4">
    <location>
        <begin position="908"/>
        <end position="918"/>
    </location>
</feature>
<feature type="compositionally biased region" description="Acidic residues" evidence="4">
    <location>
        <begin position="935"/>
        <end position="1105"/>
    </location>
</feature>
<feature type="modified residue" description="Pentaglycyl murein peptidoglycan amidated threonine" evidence="3">
    <location>
        <position position="1132"/>
    </location>
</feature>